<protein>
    <recommendedName>
        <fullName>Endothelin-converting enzyme 1</fullName>
        <shortName>ECE-1</shortName>
        <ecNumber>3.4.24.71</ecNumber>
    </recommendedName>
</protein>
<comment type="function">
    <text>Converts big endothelin-1 to endothelin-1.</text>
</comment>
<comment type="catalytic activity">
    <reaction>
        <text>Hydrolysis of the 21-Trp-|-Val-22 bond in big endothelin to form endothelin 1.</text>
        <dbReference type="EC" id="3.4.24.71"/>
    </reaction>
</comment>
<comment type="cofactor">
    <cofactor evidence="1">
        <name>Zn(2+)</name>
        <dbReference type="ChEBI" id="CHEBI:29105"/>
    </cofactor>
    <text evidence="1">Binds 1 zinc ion per subunit.</text>
</comment>
<comment type="activity regulation">
    <text>Inhibited by phosphoramidon.</text>
</comment>
<comment type="subunit">
    <text evidence="2 6">Homodimer; disulfide-linked (By similarity). Interacts with PPP1R16B (PubMed:26806547). Interacts with TSPAN8; this interaction recruits the endothelin converting enzyme ECE1 to tetraspanin-enriched microdomains and positively modulates its enzymatic activity (By similarity).</text>
</comment>
<comment type="subcellular location">
    <subcellularLocation>
        <location>Cell membrane</location>
        <topology>Single-pass type II membrane protein</topology>
    </subcellularLocation>
</comment>
<comment type="similarity">
    <text evidence="4 7">Belongs to the peptidase M13 family.</text>
</comment>
<organism>
    <name type="scientific">Bos taurus</name>
    <name type="common">Bovine</name>
    <dbReference type="NCBI Taxonomy" id="9913"/>
    <lineage>
        <taxon>Eukaryota</taxon>
        <taxon>Metazoa</taxon>
        <taxon>Chordata</taxon>
        <taxon>Craniata</taxon>
        <taxon>Vertebrata</taxon>
        <taxon>Euteleostomi</taxon>
        <taxon>Mammalia</taxon>
        <taxon>Eutheria</taxon>
        <taxon>Laurasiatheria</taxon>
        <taxon>Artiodactyla</taxon>
        <taxon>Ruminantia</taxon>
        <taxon>Pecora</taxon>
        <taxon>Bovidae</taxon>
        <taxon>Bovinae</taxon>
        <taxon>Bos</taxon>
    </lineage>
</organism>
<name>ECE1_BOVIN</name>
<reference key="1">
    <citation type="journal article" date="1994" name="FEBS Lett.">
        <title>Molecular characterization of human and bovine endothelin converting enzyme (ECE-1).</title>
        <authorList>
            <person name="Schmidt M."/>
            <person name="Kroeger B."/>
            <person name="Jacob E."/>
            <person name="Seulberger H."/>
            <person name="Subkowski T."/>
            <person name="Otter R."/>
            <person name="Meyer T."/>
            <person name="Schmalzing G."/>
            <person name="Hillen H."/>
        </authorList>
    </citation>
    <scope>NUCLEOTIDE SEQUENCE [MRNA]</scope>
    <scope>PARTIAL PROTEIN SEQUENCE</scope>
</reference>
<reference key="2">
    <citation type="submission" date="2007-02" db="EMBL/GenBank/DDBJ databases">
        <authorList>
            <consortium name="NIH - Mammalian Gene Collection (MGC) project"/>
        </authorList>
    </citation>
    <scope>NUCLEOTIDE SEQUENCE [LARGE SCALE MRNA]</scope>
    <source>
        <strain>Hereford</strain>
        <tissue>Fetal skin</tissue>
    </source>
</reference>
<reference key="3">
    <citation type="journal article" date="2016" name="Int. J. Biochem. Cell Biol.">
        <title>TIMAP-protein phosphatase 1-complex controls endothelin-1 production via ECE-1 dephosphorylation.</title>
        <authorList>
            <person name="Boratko A."/>
            <person name="Vereb Z."/>
            <person name="Petrovski G."/>
            <person name="Csortos C."/>
        </authorList>
    </citation>
    <scope>INTERACTION WITH PPP1R16B</scope>
</reference>
<accession>P42891</accession>
<accession>A2VDM9</accession>
<gene>
    <name type="primary">ECE1</name>
</gene>
<sequence>MMSTYKRATLDEEDLVDSLSESDVYPNHLQVNFRGPRNGQRCWAARTPVEKRLVVLVALLAAALVACLAVLGIQYQTRTPSVCLSEACISVTSSILSSMDPTVDPCQDFFTYACGGWIKANPVPDGHSRWGTFSNLWEHNQAIIKHLLENSTASVSEAERKAQVYYRACMNETRIEELKAKPLMELIEKLGGWNITGPWDKDNFQDTLQVVTSHYHTSPFFSVYVSADSKNSNSNVIQVDQSGLGLPSRDYYLNKTENEKVLTGYLNYMVQLGKLLGGGAEDTIRPQMQQILDFETALANITIPQEKRRDEELIYHKVTAAELQTLAPAINWLPFLNTIFYPVEINESEPIVIYDKEYLSKVSTLINSTDKCLLNNYMIWNLVRKTSSFLDQRFQDADEKFMEVMYGTKKTCLPRWKFCVSDTENTLGFALGPMFVKATFAEDSKNIASEIILEIKKAFEESLSTLKWMDEDTRKSAKEKADAIYNMIGYPNFIMDPKELDKVFNDYTAVPDLYFENAMRFFNFSWRVTADQLRKAPNRDQWSMTPPMVNAYYSPTKNEIVFPAGILQAPFYTRSSPNALNFGGIGVVVGHELTHAFDDQGREYDKDGNLRPWWKNSSVEAFKQQTACMVEQYGNYSVNGEPVNGRHTLGENIADNGGLKAAYRAYQNWVKKNGAEQTLPTLGLTNNQLFFLSFAQVWCSVRTPESSHEGLITDPHSPSRFRVIGSISNSKEFSEHFHCPPGSPMNPHHKCEVW</sequence>
<dbReference type="EC" id="3.4.24.71"/>
<dbReference type="EMBL" id="Z35306">
    <property type="protein sequence ID" value="CAA84547.1"/>
    <property type="molecule type" value="mRNA"/>
</dbReference>
<dbReference type="EMBL" id="BC133320">
    <property type="protein sequence ID" value="AAI33321.1"/>
    <property type="molecule type" value="mRNA"/>
</dbReference>
<dbReference type="PIR" id="S51010">
    <property type="entry name" value="S47268"/>
</dbReference>
<dbReference type="RefSeq" id="XP_005203129.1">
    <property type="nucleotide sequence ID" value="XM_005203072.5"/>
</dbReference>
<dbReference type="SMR" id="P42891"/>
<dbReference type="FunCoup" id="P42891">
    <property type="interactions" value="234"/>
</dbReference>
<dbReference type="STRING" id="9913.ENSBTAP00000070717"/>
<dbReference type="BindingDB" id="P42891"/>
<dbReference type="ChEMBL" id="CHEMBL2340"/>
<dbReference type="MEROPS" id="M13.002"/>
<dbReference type="GlyCosmos" id="P42891">
    <property type="glycosylation" value="10 sites, No reported glycans"/>
</dbReference>
<dbReference type="GlyGen" id="P42891">
    <property type="glycosylation" value="10 sites"/>
</dbReference>
<dbReference type="SwissPalm" id="P42891"/>
<dbReference type="PaxDb" id="9913-ENSBTAP00000055669"/>
<dbReference type="PeptideAtlas" id="P42891"/>
<dbReference type="Ensembl" id="ENSBTAT00000076810.2">
    <property type="protein sequence ID" value="ENSBTAP00000071468.1"/>
    <property type="gene ID" value="ENSBTAG00000002977.7"/>
</dbReference>
<dbReference type="GeneID" id="281133"/>
<dbReference type="CTD" id="1889"/>
<dbReference type="VEuPathDB" id="HostDB:ENSBTAG00000002977"/>
<dbReference type="VGNC" id="VGNC:28302">
    <property type="gene designation" value="ECE1"/>
</dbReference>
<dbReference type="eggNOG" id="KOG3624">
    <property type="taxonomic scope" value="Eukaryota"/>
</dbReference>
<dbReference type="GeneTree" id="ENSGT00940000156050"/>
<dbReference type="HOGENOM" id="CLU_006187_8_0_1"/>
<dbReference type="InParanoid" id="P42891"/>
<dbReference type="OrthoDB" id="6475849at2759"/>
<dbReference type="Reactome" id="R-BTA-375276">
    <property type="pathway name" value="Peptide ligand-binding receptors"/>
</dbReference>
<dbReference type="SABIO-RK" id="P42891"/>
<dbReference type="PRO" id="PR:P42891"/>
<dbReference type="Proteomes" id="UP000009136">
    <property type="component" value="Chromosome 2"/>
</dbReference>
<dbReference type="Bgee" id="ENSBTAG00000002977">
    <property type="expression patterns" value="Expressed in granulosa cell and 107 other cell types or tissues"/>
</dbReference>
<dbReference type="GO" id="GO:0016020">
    <property type="term" value="C:membrane"/>
    <property type="evidence" value="ECO:0000314"/>
    <property type="project" value="BHF-UCL"/>
</dbReference>
<dbReference type="GO" id="GO:0005886">
    <property type="term" value="C:plasma membrane"/>
    <property type="evidence" value="ECO:0000318"/>
    <property type="project" value="GO_Central"/>
</dbReference>
<dbReference type="GO" id="GO:0004175">
    <property type="term" value="F:endopeptidase activity"/>
    <property type="evidence" value="ECO:0000314"/>
    <property type="project" value="BHF-UCL"/>
</dbReference>
<dbReference type="GO" id="GO:0046872">
    <property type="term" value="F:metal ion binding"/>
    <property type="evidence" value="ECO:0007669"/>
    <property type="project" value="UniProtKB-KW"/>
</dbReference>
<dbReference type="GO" id="GO:0004222">
    <property type="term" value="F:metalloendopeptidase activity"/>
    <property type="evidence" value="ECO:0000314"/>
    <property type="project" value="BHF-UCL"/>
</dbReference>
<dbReference type="GO" id="GO:0042803">
    <property type="term" value="F:protein homodimerization activity"/>
    <property type="evidence" value="ECO:0000353"/>
    <property type="project" value="BHF-UCL"/>
</dbReference>
<dbReference type="GO" id="GO:0016486">
    <property type="term" value="P:peptide hormone processing"/>
    <property type="evidence" value="ECO:0000314"/>
    <property type="project" value="BHF-UCL"/>
</dbReference>
<dbReference type="GO" id="GO:0016485">
    <property type="term" value="P:protein processing"/>
    <property type="evidence" value="ECO:0000314"/>
    <property type="project" value="BHF-UCL"/>
</dbReference>
<dbReference type="GO" id="GO:0006508">
    <property type="term" value="P:proteolysis"/>
    <property type="evidence" value="ECO:0000250"/>
    <property type="project" value="AgBase"/>
</dbReference>
<dbReference type="CDD" id="cd08662">
    <property type="entry name" value="M13"/>
    <property type="match status" value="1"/>
</dbReference>
<dbReference type="FunFam" id="3.40.390.10:FF:000003">
    <property type="entry name" value="endothelin-converting enzyme 1 isoform X1"/>
    <property type="match status" value="1"/>
</dbReference>
<dbReference type="Gene3D" id="3.40.390.10">
    <property type="entry name" value="Collagenase (Catalytic Domain)"/>
    <property type="match status" value="1"/>
</dbReference>
<dbReference type="Gene3D" id="1.10.1380.10">
    <property type="entry name" value="Neutral endopeptidase , domain2"/>
    <property type="match status" value="1"/>
</dbReference>
<dbReference type="InterPro" id="IPR024079">
    <property type="entry name" value="MetalloPept_cat_dom_sf"/>
</dbReference>
<dbReference type="InterPro" id="IPR000718">
    <property type="entry name" value="Peptidase_M13"/>
</dbReference>
<dbReference type="InterPro" id="IPR018497">
    <property type="entry name" value="Peptidase_M13_C"/>
</dbReference>
<dbReference type="InterPro" id="IPR042089">
    <property type="entry name" value="Peptidase_M13_dom_2"/>
</dbReference>
<dbReference type="InterPro" id="IPR008753">
    <property type="entry name" value="Peptidase_M13_N"/>
</dbReference>
<dbReference type="PANTHER" id="PTHR11733:SF130">
    <property type="entry name" value="ENDOTHELIN-CONVERTING ENZYME 1"/>
    <property type="match status" value="1"/>
</dbReference>
<dbReference type="PANTHER" id="PTHR11733">
    <property type="entry name" value="ZINC METALLOPROTEASE FAMILY M13 NEPRILYSIN-RELATED"/>
    <property type="match status" value="1"/>
</dbReference>
<dbReference type="Pfam" id="PF01431">
    <property type="entry name" value="Peptidase_M13"/>
    <property type="match status" value="1"/>
</dbReference>
<dbReference type="Pfam" id="PF05649">
    <property type="entry name" value="Peptidase_M13_N"/>
    <property type="match status" value="1"/>
</dbReference>
<dbReference type="PRINTS" id="PR00786">
    <property type="entry name" value="NEPRILYSIN"/>
</dbReference>
<dbReference type="SUPFAM" id="SSF55486">
    <property type="entry name" value="Metalloproteases ('zincins'), catalytic domain"/>
    <property type="match status" value="1"/>
</dbReference>
<dbReference type="PROSITE" id="PS51885">
    <property type="entry name" value="NEPRILYSIN"/>
    <property type="match status" value="1"/>
</dbReference>
<dbReference type="PROSITE" id="PS00142">
    <property type="entry name" value="ZINC_PROTEASE"/>
    <property type="match status" value="1"/>
</dbReference>
<feature type="chain" id="PRO_0000078218" description="Endothelin-converting enzyme 1">
    <location>
        <begin position="1"/>
        <end position="754"/>
    </location>
</feature>
<feature type="topological domain" description="Cytoplasmic" evidence="3">
    <location>
        <begin position="1"/>
        <end position="52"/>
    </location>
</feature>
<feature type="transmembrane region" description="Helical; Signal-anchor for type II membrane protein" evidence="3">
    <location>
        <begin position="53"/>
        <end position="73"/>
    </location>
</feature>
<feature type="topological domain" description="Extracellular" evidence="3">
    <location>
        <begin position="74"/>
        <end position="754"/>
    </location>
</feature>
<feature type="domain" description="Peptidase M13" evidence="4">
    <location>
        <begin position="82"/>
        <end position="754"/>
    </location>
</feature>
<feature type="active site" evidence="4 5">
    <location>
        <position position="592"/>
    </location>
</feature>
<feature type="active site" description="Proton donor" evidence="4">
    <location>
        <position position="655"/>
    </location>
</feature>
<feature type="binding site" evidence="4 5">
    <location>
        <position position="591"/>
    </location>
    <ligand>
        <name>Zn(2+)</name>
        <dbReference type="ChEBI" id="CHEBI:29105"/>
        <note>catalytic</note>
    </ligand>
</feature>
<feature type="binding site" evidence="4 5">
    <location>
        <position position="595"/>
    </location>
    <ligand>
        <name>Zn(2+)</name>
        <dbReference type="ChEBI" id="CHEBI:29105"/>
        <note>catalytic</note>
    </ligand>
</feature>
<feature type="binding site" evidence="4">
    <location>
        <position position="651"/>
    </location>
    <ligand>
        <name>Zn(2+)</name>
        <dbReference type="ChEBI" id="CHEBI:29105"/>
        <note>catalytic</note>
    </ligand>
</feature>
<feature type="modified residue" description="Phosphothreonine" evidence="2">
    <location>
        <position position="9"/>
    </location>
</feature>
<feature type="glycosylation site" description="N-linked (GlcNAc...) asparagine" evidence="3">
    <location>
        <position position="150"/>
    </location>
</feature>
<feature type="glycosylation site" description="N-linked (GlcNAc...) asparagine" evidence="3">
    <location>
        <position position="171"/>
    </location>
</feature>
<feature type="glycosylation site" description="N-linked (GlcNAc...) asparagine" evidence="3">
    <location>
        <position position="194"/>
    </location>
</feature>
<feature type="glycosylation site" description="N-linked (GlcNAc...) asparagine" evidence="3">
    <location>
        <position position="254"/>
    </location>
</feature>
<feature type="glycosylation site" description="N-linked (GlcNAc...) asparagine" evidence="3">
    <location>
        <position position="300"/>
    </location>
</feature>
<feature type="glycosylation site" description="N-linked (GlcNAc...) asparagine" evidence="3">
    <location>
        <position position="346"/>
    </location>
</feature>
<feature type="glycosylation site" description="N-linked (GlcNAc...) asparagine" evidence="3">
    <location>
        <position position="367"/>
    </location>
</feature>
<feature type="glycosylation site" description="N-linked (GlcNAc...) asparagine" evidence="3">
    <location>
        <position position="523"/>
    </location>
</feature>
<feature type="glycosylation site" description="N-linked (GlcNAc...) asparagine" evidence="3">
    <location>
        <position position="616"/>
    </location>
</feature>
<feature type="glycosylation site" description="N-linked (GlcNAc...) asparagine" evidence="3">
    <location>
        <position position="635"/>
    </location>
</feature>
<feature type="disulfide bond" evidence="4">
    <location>
        <begin position="83"/>
        <end position="88"/>
    </location>
</feature>
<feature type="disulfide bond" evidence="4">
    <location>
        <begin position="106"/>
        <end position="739"/>
    </location>
</feature>
<feature type="disulfide bond" evidence="4">
    <location>
        <begin position="114"/>
        <end position="699"/>
    </location>
</feature>
<feature type="disulfide bond" evidence="4">
    <location>
        <begin position="169"/>
        <end position="419"/>
    </location>
</feature>
<feature type="disulfide bond" evidence="4">
    <location>
        <begin position="628"/>
        <end position="751"/>
    </location>
</feature>
<feature type="sequence conflict" description="In Ref. 1; CAA84547." evidence="7" ref="1">
    <original>A</original>
    <variation>P</variation>
    <location>
        <position position="8"/>
    </location>
</feature>
<feature type="sequence conflict" description="In Ref. 2; AAI33321." evidence="7" ref="2">
    <original>A</original>
    <variation>S</variation>
    <location>
        <position position="120"/>
    </location>
</feature>
<feature type="sequence conflict" description="In Ref. 1; CAA84547." evidence="7" ref="1">
    <original>AQV</original>
    <variation>DQE</variation>
    <location>
        <begin position="162"/>
        <end position="164"/>
    </location>
</feature>
<proteinExistence type="evidence at protein level"/>
<evidence type="ECO:0000250" key="1"/>
<evidence type="ECO:0000250" key="2">
    <source>
        <dbReference type="UniProtKB" id="P42892"/>
    </source>
</evidence>
<evidence type="ECO:0000255" key="3"/>
<evidence type="ECO:0000255" key="4">
    <source>
        <dbReference type="PROSITE-ProRule" id="PRU01233"/>
    </source>
</evidence>
<evidence type="ECO:0000255" key="5">
    <source>
        <dbReference type="PROSITE-ProRule" id="PRU10095"/>
    </source>
</evidence>
<evidence type="ECO:0000269" key="6">
    <source>
    </source>
</evidence>
<evidence type="ECO:0000305" key="7"/>
<keyword id="KW-1003">Cell membrane</keyword>
<keyword id="KW-0903">Direct protein sequencing</keyword>
<keyword id="KW-1015">Disulfide bond</keyword>
<keyword id="KW-0325">Glycoprotein</keyword>
<keyword id="KW-0378">Hydrolase</keyword>
<keyword id="KW-0472">Membrane</keyword>
<keyword id="KW-0479">Metal-binding</keyword>
<keyword id="KW-0482">Metalloprotease</keyword>
<keyword id="KW-0597">Phosphoprotein</keyword>
<keyword id="KW-0645">Protease</keyword>
<keyword id="KW-1185">Reference proteome</keyword>
<keyword id="KW-0735">Signal-anchor</keyword>
<keyword id="KW-0812">Transmembrane</keyword>
<keyword id="KW-1133">Transmembrane helix</keyword>
<keyword id="KW-0862">Zinc</keyword>